<sequence>MGLFDKHLAYRDAYKAIQDVGANPFKVRFDAVHSPTEGVVDGRPTILLGTNNYLGLTFDEQAIAASVKAVQERGTGTTGSRIANGSFESHVELEQELAKFYGRKHAMVFTTGYQANLGVLSTLVGRGDHLILDADSHASIYDGSRLGHAEVIRFRHNDPEDLAKRLRRLGDAPGERLIVVEGIYSMIGDVAPLKEIAAVKREMGGYLLVDEAHSMGVLGATGRGLAEAAGVEEDVDFIVGTFSKSLGAIGGFCVSDHDDFDVMRVICRPYMFTASLPPAVAASTVTALRRMIEQPELRDRLNRNAKRLYDGLTAMGFLTGPSASPIVAATMPDQERAIAMWNGLLQAGVYLNLALPPATPDSRPLLRASVSAAHTDEQIDAVLKTYGEIGAALGVIEPLKRARA</sequence>
<keyword id="KW-0012">Acyltransferase</keyword>
<keyword id="KW-0963">Cytoplasm</keyword>
<keyword id="KW-0443">Lipid metabolism</keyword>
<keyword id="KW-0663">Pyridoxal phosphate</keyword>
<keyword id="KW-1185">Reference proteome</keyword>
<keyword id="KW-0808">Transferase</keyword>
<gene>
    <name evidence="4 5" type="primary">spt</name>
    <name evidence="8" type="ordered locus">CCNA_01220</name>
</gene>
<name>SPT_CAUVN</name>
<proteinExistence type="evidence at protein level"/>
<reference key="1">
    <citation type="journal article" date="2010" name="J. Bacteriol.">
        <title>The genetic basis of laboratory adaptation in Caulobacter crescentus.</title>
        <authorList>
            <person name="Marks M.E."/>
            <person name="Castro-Rojas C.M."/>
            <person name="Teiling C."/>
            <person name="Du L."/>
            <person name="Kapatral V."/>
            <person name="Walunas T.L."/>
            <person name="Crosson S."/>
        </authorList>
    </citation>
    <scope>NUCLEOTIDE SEQUENCE [LARGE SCALE GENOMIC DNA]</scope>
    <source>
        <strain>NA1000 / CB15N</strain>
    </source>
</reference>
<reference key="2">
    <citation type="journal article" date="2021" name="Environ. Microbiol.">
        <title>Five structural genes required for ceramide synthesis in Caulobacter and for bacterial survival.</title>
        <authorList>
            <person name="Olea-Ozuna R.J."/>
            <person name="Poggio S."/>
            <person name="Bergstroem E."/>
            <person name="Quiroz-Rocha E."/>
            <person name="Garcia-Soriano D.A."/>
            <person name="Sahonero-Canavesi D.X."/>
            <person name="Padilla-Gomez J."/>
            <person name="Martinez-Aguilar L."/>
            <person name="Lopez-Lara I.M."/>
            <person name="Thomas-Oates J."/>
            <person name="Geiger O."/>
        </authorList>
    </citation>
    <scope>FUNCTION</scope>
    <scope>DISRUPTION PHENOTYPE</scope>
    <source>
        <strain>NA1000 / CB15N</strain>
    </source>
</reference>
<reference key="3">
    <citation type="journal article" date="2022" name="Nat. Chem. Biol.">
        <title>Convergent evolution of bacterial ceramide synthesis.</title>
        <authorList>
            <person name="Stankeviciute G."/>
            <person name="Tang P."/>
            <person name="Ashley B."/>
            <person name="Chamberlain J.D."/>
            <person name="Hansen M.E.B."/>
            <person name="Coleman A."/>
            <person name="D'Emilia R."/>
            <person name="Fu L."/>
            <person name="Mohan E.C."/>
            <person name="Nguyen H."/>
            <person name="Guan Z."/>
            <person name="Campopiano D.J."/>
            <person name="Klein E.A."/>
        </authorList>
    </citation>
    <scope>FUNCTION</scope>
    <scope>CATALYTIC ACTIVITY</scope>
    <scope>BIOPHYSICOCHEMICAL PROPERTIES</scope>
    <scope>SUBCELLULAR LOCATION</scope>
    <scope>IDENTIFICATION BY MASS SPECTROMETRY</scope>
    <source>
        <strain>NA1000 / CB15N</strain>
    </source>
</reference>
<comment type="function">
    <text evidence="2 3">Involved in de novo bacterial ceramide synthesis (PubMed:33063925, PubMed:34969973). Catalyzes the condensation of L-serine with palmitoyl-CoA (hexadecanoyl-CoA) to produce 3-oxosphinganine (PubMed:34969973). Can also condense serine and C16:1-CoA, but shows a preference for palmitoyl-CoA (PubMed:34969973).</text>
</comment>
<comment type="catalytic activity">
    <reaction evidence="3">
        <text>L-serine + hexadecanoyl-CoA + H(+) = 3-oxosphinganine + CO2 + CoA</text>
        <dbReference type="Rhea" id="RHEA:14761"/>
        <dbReference type="ChEBI" id="CHEBI:15378"/>
        <dbReference type="ChEBI" id="CHEBI:16526"/>
        <dbReference type="ChEBI" id="CHEBI:33384"/>
        <dbReference type="ChEBI" id="CHEBI:57287"/>
        <dbReference type="ChEBI" id="CHEBI:57379"/>
        <dbReference type="ChEBI" id="CHEBI:58299"/>
        <dbReference type="EC" id="2.3.1.50"/>
    </reaction>
    <physiologicalReaction direction="left-to-right" evidence="3">
        <dbReference type="Rhea" id="RHEA:14762"/>
    </physiologicalReaction>
</comment>
<comment type="cofactor">
    <cofactor evidence="1">
        <name>pyridoxal 5'-phosphate</name>
        <dbReference type="ChEBI" id="CHEBI:597326"/>
    </cofactor>
</comment>
<comment type="biophysicochemical properties">
    <kinetics>
        <KM evidence="3">110 uM for hexadecanoyl-CoA</KM>
        <KM evidence="3">2.98 mM for L-serine</KM>
    </kinetics>
</comment>
<comment type="pathway">
    <text evidence="6">Lipid metabolism; sphingolipid metabolism.</text>
</comment>
<comment type="subcellular location">
    <subcellularLocation>
        <location evidence="7">Cytoplasm</location>
    </subcellularLocation>
</comment>
<comment type="disruption phenotype">
    <text evidence="2">Survival of the spt-deficient mutant is much reduced, in comparison with wild type, during stationary phase of growth, especially at elevated temperatures (PubMed:33063925). Mutants are resistant towards the antibiotic polymyxin B (PubMed:33063925). Mutation causes hypersensitivity to antibiotics which affect disparate processes in different cellular compartments (PubMed:33063925).</text>
</comment>
<comment type="miscellaneous">
    <text evidence="3">The bacterial ceramide synthesis pathway operates in a different order from that in eukaryotes. Furthermore, phylogenetic analyzes support the hypothesis that the bacterial and eukaryotic ceramide pathways evolved independently.</text>
</comment>
<comment type="similarity">
    <text evidence="6">Belongs to the class-II pyridoxal-phosphate-dependent aminotransferase family.</text>
</comment>
<protein>
    <recommendedName>
        <fullName evidence="4 5">Serine palmitoyltransferase</fullName>
        <ecNumber evidence="3">2.3.1.50</ecNumber>
    </recommendedName>
</protein>
<dbReference type="EC" id="2.3.1.50" evidence="3"/>
<dbReference type="EMBL" id="CP001340">
    <property type="protein sequence ID" value="ACL94685.1"/>
    <property type="molecule type" value="Genomic_DNA"/>
</dbReference>
<dbReference type="RefSeq" id="WP_010919046.1">
    <property type="nucleotide sequence ID" value="NC_011916.1"/>
</dbReference>
<dbReference type="SMR" id="A0A0H3C7E9"/>
<dbReference type="KEGG" id="ccs:CCNA_01220"/>
<dbReference type="PATRIC" id="fig|565050.3.peg.1202"/>
<dbReference type="HOGENOM" id="CLU_015846_11_0_5"/>
<dbReference type="OrthoDB" id="9807157at2"/>
<dbReference type="PhylomeDB" id="A0A0H3C7E9"/>
<dbReference type="UniPathway" id="UPA00222"/>
<dbReference type="Proteomes" id="UP000001364">
    <property type="component" value="Chromosome"/>
</dbReference>
<dbReference type="GO" id="GO:0005737">
    <property type="term" value="C:cytoplasm"/>
    <property type="evidence" value="ECO:0007669"/>
    <property type="project" value="UniProtKB-SubCell"/>
</dbReference>
<dbReference type="GO" id="GO:0016020">
    <property type="term" value="C:membrane"/>
    <property type="evidence" value="ECO:0007669"/>
    <property type="project" value="GOC"/>
</dbReference>
<dbReference type="GO" id="GO:0030170">
    <property type="term" value="F:pyridoxal phosphate binding"/>
    <property type="evidence" value="ECO:0007669"/>
    <property type="project" value="InterPro"/>
</dbReference>
<dbReference type="GO" id="GO:0004758">
    <property type="term" value="F:serine C-palmitoyltransferase activity"/>
    <property type="evidence" value="ECO:0007669"/>
    <property type="project" value="UniProtKB-EC"/>
</dbReference>
<dbReference type="GO" id="GO:0009058">
    <property type="term" value="P:biosynthetic process"/>
    <property type="evidence" value="ECO:0007669"/>
    <property type="project" value="InterPro"/>
</dbReference>
<dbReference type="GO" id="GO:0006665">
    <property type="term" value="P:sphingolipid metabolic process"/>
    <property type="evidence" value="ECO:0007669"/>
    <property type="project" value="UniProtKB-UniPathway"/>
</dbReference>
<dbReference type="CDD" id="cd06454">
    <property type="entry name" value="KBL_like"/>
    <property type="match status" value="1"/>
</dbReference>
<dbReference type="Gene3D" id="3.90.1150.10">
    <property type="entry name" value="Aspartate Aminotransferase, domain 1"/>
    <property type="match status" value="1"/>
</dbReference>
<dbReference type="Gene3D" id="3.40.640.10">
    <property type="entry name" value="Type I PLP-dependent aspartate aminotransferase-like (Major domain)"/>
    <property type="match status" value="1"/>
</dbReference>
<dbReference type="InterPro" id="IPR001917">
    <property type="entry name" value="Aminotrans_II_pyridoxalP_BS"/>
</dbReference>
<dbReference type="InterPro" id="IPR004839">
    <property type="entry name" value="Aminotransferase_I/II_large"/>
</dbReference>
<dbReference type="InterPro" id="IPR050087">
    <property type="entry name" value="AON_synthase_class-II"/>
</dbReference>
<dbReference type="InterPro" id="IPR015424">
    <property type="entry name" value="PyrdxlP-dep_Trfase"/>
</dbReference>
<dbReference type="InterPro" id="IPR015421">
    <property type="entry name" value="PyrdxlP-dep_Trfase_major"/>
</dbReference>
<dbReference type="InterPro" id="IPR015422">
    <property type="entry name" value="PyrdxlP-dep_Trfase_small"/>
</dbReference>
<dbReference type="NCBIfam" id="NF047599">
    <property type="entry name" value="SerpalmtaseBetaP"/>
    <property type="match status" value="1"/>
</dbReference>
<dbReference type="PANTHER" id="PTHR13693">
    <property type="entry name" value="CLASS II AMINOTRANSFERASE/8-AMINO-7-OXONONANOATE SYNTHASE"/>
    <property type="match status" value="1"/>
</dbReference>
<dbReference type="PANTHER" id="PTHR13693:SF3">
    <property type="entry name" value="LD36009P"/>
    <property type="match status" value="1"/>
</dbReference>
<dbReference type="Pfam" id="PF00155">
    <property type="entry name" value="Aminotran_1_2"/>
    <property type="match status" value="1"/>
</dbReference>
<dbReference type="SUPFAM" id="SSF53383">
    <property type="entry name" value="PLP-dependent transferases"/>
    <property type="match status" value="1"/>
</dbReference>
<dbReference type="PROSITE" id="PS00599">
    <property type="entry name" value="AA_TRANSFER_CLASS_2"/>
    <property type="match status" value="1"/>
</dbReference>
<evidence type="ECO:0000250" key="1">
    <source>
        <dbReference type="UniProtKB" id="P12998"/>
    </source>
</evidence>
<evidence type="ECO:0000269" key="2">
    <source>
    </source>
</evidence>
<evidence type="ECO:0000269" key="3">
    <source>
    </source>
</evidence>
<evidence type="ECO:0000303" key="4">
    <source>
    </source>
</evidence>
<evidence type="ECO:0000303" key="5">
    <source>
    </source>
</evidence>
<evidence type="ECO:0000305" key="6"/>
<evidence type="ECO:0000305" key="7">
    <source>
    </source>
</evidence>
<evidence type="ECO:0000312" key="8">
    <source>
        <dbReference type="EMBL" id="ACL94685.1"/>
    </source>
</evidence>
<organism>
    <name type="scientific">Caulobacter vibrioides (strain NA1000 / CB15N)</name>
    <name type="common">Caulobacter crescentus</name>
    <dbReference type="NCBI Taxonomy" id="565050"/>
    <lineage>
        <taxon>Bacteria</taxon>
        <taxon>Pseudomonadati</taxon>
        <taxon>Pseudomonadota</taxon>
        <taxon>Alphaproteobacteria</taxon>
        <taxon>Caulobacterales</taxon>
        <taxon>Caulobacteraceae</taxon>
        <taxon>Caulobacter</taxon>
    </lineage>
</organism>
<feature type="chain" id="PRO_0000455452" description="Serine palmitoyltransferase">
    <location>
        <begin position="1"/>
        <end position="404"/>
    </location>
</feature>
<feature type="binding site" evidence="1">
    <location>
        <begin position="112"/>
        <end position="113"/>
    </location>
    <ligand>
        <name>pyridoxal 5'-phosphate</name>
        <dbReference type="ChEBI" id="CHEBI:597326"/>
    </ligand>
</feature>
<feature type="binding site" evidence="1">
    <location>
        <position position="185"/>
    </location>
    <ligand>
        <name>pyridoxal 5'-phosphate</name>
        <dbReference type="ChEBI" id="CHEBI:597326"/>
    </ligand>
</feature>
<feature type="binding site" evidence="1">
    <location>
        <position position="213"/>
    </location>
    <ligand>
        <name>pyridoxal 5'-phosphate</name>
        <dbReference type="ChEBI" id="CHEBI:597326"/>
    </ligand>
</feature>
<feature type="binding site" evidence="1">
    <location>
        <position position="241"/>
    </location>
    <ligand>
        <name>pyridoxal 5'-phosphate</name>
        <dbReference type="ChEBI" id="CHEBI:597326"/>
    </ligand>
</feature>
<feature type="modified residue" description="N6-(pyridoxal phosphate)lysine" evidence="1">
    <location>
        <position position="244"/>
    </location>
</feature>
<accession>A0A0H3C7E9</accession>